<reference key="1">
    <citation type="submission" date="1999-06" db="EMBL/GenBank/DDBJ databases">
        <title>Heterogeneity in the rate of cytochrome b evolution among species of rodents.</title>
        <authorList>
            <person name="Spradling T.A."/>
            <person name="Hafner M.S."/>
            <person name="Demastes J.W."/>
        </authorList>
    </citation>
    <scope>NUCLEOTIDE SEQUENCE [GENOMIC DNA]</scope>
</reference>
<geneLocation type="mitochondrion"/>
<name>CYB_THOBU</name>
<dbReference type="EMBL" id="AF155867">
    <property type="protein sequence ID" value="AAG59611.1"/>
    <property type="molecule type" value="Genomic_DNA"/>
</dbReference>
<dbReference type="SMR" id="Q9B9E4"/>
<dbReference type="GO" id="GO:0005743">
    <property type="term" value="C:mitochondrial inner membrane"/>
    <property type="evidence" value="ECO:0007669"/>
    <property type="project" value="UniProtKB-SubCell"/>
</dbReference>
<dbReference type="GO" id="GO:0045275">
    <property type="term" value="C:respiratory chain complex III"/>
    <property type="evidence" value="ECO:0007669"/>
    <property type="project" value="InterPro"/>
</dbReference>
<dbReference type="GO" id="GO:0046872">
    <property type="term" value="F:metal ion binding"/>
    <property type="evidence" value="ECO:0007669"/>
    <property type="project" value="UniProtKB-KW"/>
</dbReference>
<dbReference type="GO" id="GO:0008121">
    <property type="term" value="F:ubiquinol-cytochrome-c reductase activity"/>
    <property type="evidence" value="ECO:0007669"/>
    <property type="project" value="InterPro"/>
</dbReference>
<dbReference type="GO" id="GO:0006122">
    <property type="term" value="P:mitochondrial electron transport, ubiquinol to cytochrome c"/>
    <property type="evidence" value="ECO:0007669"/>
    <property type="project" value="TreeGrafter"/>
</dbReference>
<dbReference type="CDD" id="cd00290">
    <property type="entry name" value="cytochrome_b_C"/>
    <property type="match status" value="1"/>
</dbReference>
<dbReference type="CDD" id="cd00284">
    <property type="entry name" value="Cytochrome_b_N"/>
    <property type="match status" value="1"/>
</dbReference>
<dbReference type="FunFam" id="1.20.810.10:FF:000002">
    <property type="entry name" value="Cytochrome b"/>
    <property type="match status" value="1"/>
</dbReference>
<dbReference type="Gene3D" id="1.20.810.10">
    <property type="entry name" value="Cytochrome Bc1 Complex, Chain C"/>
    <property type="match status" value="1"/>
</dbReference>
<dbReference type="InterPro" id="IPR005798">
    <property type="entry name" value="Cyt_b/b6_C"/>
</dbReference>
<dbReference type="InterPro" id="IPR036150">
    <property type="entry name" value="Cyt_b/b6_C_sf"/>
</dbReference>
<dbReference type="InterPro" id="IPR005797">
    <property type="entry name" value="Cyt_b/b6_N"/>
</dbReference>
<dbReference type="InterPro" id="IPR027387">
    <property type="entry name" value="Cytb/b6-like_sf"/>
</dbReference>
<dbReference type="InterPro" id="IPR030689">
    <property type="entry name" value="Cytochrome_b"/>
</dbReference>
<dbReference type="InterPro" id="IPR048260">
    <property type="entry name" value="Cytochrome_b_C_euk/bac"/>
</dbReference>
<dbReference type="InterPro" id="IPR048259">
    <property type="entry name" value="Cytochrome_b_N_euk/bac"/>
</dbReference>
<dbReference type="InterPro" id="IPR016174">
    <property type="entry name" value="Di-haem_cyt_TM"/>
</dbReference>
<dbReference type="PANTHER" id="PTHR19271">
    <property type="entry name" value="CYTOCHROME B"/>
    <property type="match status" value="1"/>
</dbReference>
<dbReference type="PANTHER" id="PTHR19271:SF16">
    <property type="entry name" value="CYTOCHROME B"/>
    <property type="match status" value="1"/>
</dbReference>
<dbReference type="Pfam" id="PF00032">
    <property type="entry name" value="Cytochrom_B_C"/>
    <property type="match status" value="1"/>
</dbReference>
<dbReference type="Pfam" id="PF00033">
    <property type="entry name" value="Cytochrome_B"/>
    <property type="match status" value="1"/>
</dbReference>
<dbReference type="PIRSF" id="PIRSF038885">
    <property type="entry name" value="COB"/>
    <property type="match status" value="1"/>
</dbReference>
<dbReference type="SUPFAM" id="SSF81648">
    <property type="entry name" value="a domain/subunit of cytochrome bc1 complex (Ubiquinol-cytochrome c reductase)"/>
    <property type="match status" value="1"/>
</dbReference>
<dbReference type="SUPFAM" id="SSF81342">
    <property type="entry name" value="Transmembrane di-heme cytochromes"/>
    <property type="match status" value="1"/>
</dbReference>
<dbReference type="PROSITE" id="PS51003">
    <property type="entry name" value="CYTB_CTER"/>
    <property type="match status" value="1"/>
</dbReference>
<dbReference type="PROSITE" id="PS51002">
    <property type="entry name" value="CYTB_NTER"/>
    <property type="match status" value="1"/>
</dbReference>
<accession>Q9B9E4</accession>
<feature type="chain" id="PRO_0000257954" description="Cytochrome b">
    <location>
        <begin position="1"/>
        <end position="379"/>
    </location>
</feature>
<feature type="transmembrane region" description="Helical" evidence="2">
    <location>
        <begin position="33"/>
        <end position="53"/>
    </location>
</feature>
<feature type="transmembrane region" description="Helical" evidence="2">
    <location>
        <begin position="77"/>
        <end position="98"/>
    </location>
</feature>
<feature type="transmembrane region" description="Helical" evidence="2">
    <location>
        <begin position="113"/>
        <end position="133"/>
    </location>
</feature>
<feature type="transmembrane region" description="Helical" evidence="2">
    <location>
        <begin position="178"/>
        <end position="198"/>
    </location>
</feature>
<feature type="transmembrane region" description="Helical" evidence="2">
    <location>
        <begin position="226"/>
        <end position="246"/>
    </location>
</feature>
<feature type="transmembrane region" description="Helical" evidence="2">
    <location>
        <begin position="288"/>
        <end position="308"/>
    </location>
</feature>
<feature type="transmembrane region" description="Helical" evidence="2">
    <location>
        <begin position="320"/>
        <end position="340"/>
    </location>
</feature>
<feature type="transmembrane region" description="Helical" evidence="2">
    <location>
        <begin position="347"/>
        <end position="367"/>
    </location>
</feature>
<feature type="binding site" description="axial binding residue" evidence="2">
    <location>
        <position position="83"/>
    </location>
    <ligand>
        <name>heme b</name>
        <dbReference type="ChEBI" id="CHEBI:60344"/>
        <label>b562</label>
    </ligand>
    <ligandPart>
        <name>Fe</name>
        <dbReference type="ChEBI" id="CHEBI:18248"/>
    </ligandPart>
</feature>
<feature type="binding site" description="axial binding residue" evidence="2">
    <location>
        <position position="97"/>
    </location>
    <ligand>
        <name>heme b</name>
        <dbReference type="ChEBI" id="CHEBI:60344"/>
        <label>b566</label>
    </ligand>
    <ligandPart>
        <name>Fe</name>
        <dbReference type="ChEBI" id="CHEBI:18248"/>
    </ligandPart>
</feature>
<feature type="binding site" description="axial binding residue" evidence="2">
    <location>
        <position position="182"/>
    </location>
    <ligand>
        <name>heme b</name>
        <dbReference type="ChEBI" id="CHEBI:60344"/>
        <label>b562</label>
    </ligand>
    <ligandPart>
        <name>Fe</name>
        <dbReference type="ChEBI" id="CHEBI:18248"/>
    </ligandPart>
</feature>
<feature type="binding site" description="axial binding residue" evidence="2">
    <location>
        <position position="196"/>
    </location>
    <ligand>
        <name>heme b</name>
        <dbReference type="ChEBI" id="CHEBI:60344"/>
        <label>b566</label>
    </ligand>
    <ligandPart>
        <name>Fe</name>
        <dbReference type="ChEBI" id="CHEBI:18248"/>
    </ligandPart>
</feature>
<feature type="binding site" evidence="2">
    <location>
        <position position="201"/>
    </location>
    <ligand>
        <name>a ubiquinone</name>
        <dbReference type="ChEBI" id="CHEBI:16389"/>
    </ligand>
</feature>
<evidence type="ECO:0000250" key="1"/>
<evidence type="ECO:0000250" key="2">
    <source>
        <dbReference type="UniProtKB" id="P00157"/>
    </source>
</evidence>
<evidence type="ECO:0000255" key="3">
    <source>
        <dbReference type="PROSITE-ProRule" id="PRU00967"/>
    </source>
</evidence>
<evidence type="ECO:0000255" key="4">
    <source>
        <dbReference type="PROSITE-ProRule" id="PRU00968"/>
    </source>
</evidence>
<sequence>MKIMRKSHPLFKIVNHAFIDLPTPPNISGWWNFGSLLGMCLILQISTGLFLAMHYTSDTLTAFSSVAHICRDVNYGWLIRYMHANGASLFFICLYMHIGRGIYYGSYLYKETWNIGILLLFLSMATAFVGYVLPWGQMSFWRPTVITNLLSAIPYIGQDLVEWIWGGFSVDKATLSRFFAFHFILPFIITALATVHLLFLHETGSNNPLGIPSDCAKIPFHPYYSTKDFLGALLLIMFFMTLVLYFPDKLGDPDNYMPANPLNTPPHIKPEWYFLFAYAILRSIPNKLGGVVALVLSILVLAFLPYLHTSNQRSLMFRPLSQSLFWTLVADLLLLTWIGGQPVESPFIIIGQVASILYFTIILILMPLAGLIENKMMKW</sequence>
<proteinExistence type="inferred from homology"/>
<comment type="function">
    <text evidence="2">Component of the ubiquinol-cytochrome c reductase complex (complex III or cytochrome b-c1 complex) that is part of the mitochondrial respiratory chain. The b-c1 complex mediates electron transfer from ubiquinol to cytochrome c. Contributes to the generation of a proton gradient across the mitochondrial membrane that is then used for ATP synthesis.</text>
</comment>
<comment type="cofactor">
    <cofactor evidence="2">
        <name>heme b</name>
        <dbReference type="ChEBI" id="CHEBI:60344"/>
    </cofactor>
    <text evidence="2">Binds 2 heme b groups non-covalently.</text>
</comment>
<comment type="subunit">
    <text evidence="2">The cytochrome bc1 complex contains 11 subunits: 3 respiratory subunits (MT-CYB, CYC1 and UQCRFS1), 2 core proteins (UQCRC1 and UQCRC2) and 6 low-molecular weight proteins (UQCRH/QCR6, UQCRB/QCR7, UQCRQ/QCR8, UQCR10/QCR9, UQCR11/QCR10 and a cleavage product of UQCRFS1). This cytochrome bc1 complex then forms a dimer.</text>
</comment>
<comment type="subcellular location">
    <subcellularLocation>
        <location evidence="2">Mitochondrion inner membrane</location>
        <topology evidence="2">Multi-pass membrane protein</topology>
    </subcellularLocation>
</comment>
<comment type="miscellaneous">
    <text evidence="1">Heme 1 (or BL or b562) is low-potential and absorbs at about 562 nm, and heme 2 (or BH or b566) is high-potential and absorbs at about 566 nm.</text>
</comment>
<comment type="similarity">
    <text evidence="3 4">Belongs to the cytochrome b family.</text>
</comment>
<comment type="caution">
    <text evidence="2">The full-length protein contains only eight transmembrane helices, not nine as predicted by bioinformatics tools.</text>
</comment>
<protein>
    <recommendedName>
        <fullName>Cytochrome b</fullName>
    </recommendedName>
    <alternativeName>
        <fullName>Complex III subunit 3</fullName>
    </alternativeName>
    <alternativeName>
        <fullName>Complex III subunit III</fullName>
    </alternativeName>
    <alternativeName>
        <fullName>Cytochrome b-c1 complex subunit 3</fullName>
    </alternativeName>
    <alternativeName>
        <fullName>Ubiquinol-cytochrome-c reductase complex cytochrome b subunit</fullName>
    </alternativeName>
</protein>
<organism>
    <name type="scientific">Thomomys bulbivorus</name>
    <name type="common">Camas pocket gopher</name>
    <name type="synonym">Diplostoma bulbivorum</name>
    <dbReference type="NCBI Taxonomy" id="113116"/>
    <lineage>
        <taxon>Eukaryota</taxon>
        <taxon>Metazoa</taxon>
        <taxon>Chordata</taxon>
        <taxon>Craniata</taxon>
        <taxon>Vertebrata</taxon>
        <taxon>Euteleostomi</taxon>
        <taxon>Mammalia</taxon>
        <taxon>Eutheria</taxon>
        <taxon>Euarchontoglires</taxon>
        <taxon>Glires</taxon>
        <taxon>Rodentia</taxon>
        <taxon>Castorimorpha</taxon>
        <taxon>Geomyidae</taxon>
        <taxon>Thomomys</taxon>
    </lineage>
</organism>
<keyword id="KW-0249">Electron transport</keyword>
<keyword id="KW-0349">Heme</keyword>
<keyword id="KW-0408">Iron</keyword>
<keyword id="KW-0472">Membrane</keyword>
<keyword id="KW-0479">Metal-binding</keyword>
<keyword id="KW-0496">Mitochondrion</keyword>
<keyword id="KW-0999">Mitochondrion inner membrane</keyword>
<keyword id="KW-0679">Respiratory chain</keyword>
<keyword id="KW-0812">Transmembrane</keyword>
<keyword id="KW-1133">Transmembrane helix</keyword>
<keyword id="KW-0813">Transport</keyword>
<keyword id="KW-0830">Ubiquinone</keyword>
<gene>
    <name type="primary">MT-CYB</name>
    <name type="synonym">COB</name>
    <name type="synonym">CYTB</name>
    <name type="synonym">MTCYB</name>
</gene>